<organism>
    <name type="scientific">Homo sapiens</name>
    <name type="common">Human</name>
    <dbReference type="NCBI Taxonomy" id="9606"/>
    <lineage>
        <taxon>Eukaryota</taxon>
        <taxon>Metazoa</taxon>
        <taxon>Chordata</taxon>
        <taxon>Craniata</taxon>
        <taxon>Vertebrata</taxon>
        <taxon>Euteleostomi</taxon>
        <taxon>Mammalia</taxon>
        <taxon>Eutheria</taxon>
        <taxon>Euarchontoglires</taxon>
        <taxon>Primates</taxon>
        <taxon>Haplorrhini</taxon>
        <taxon>Catarrhini</taxon>
        <taxon>Hominidae</taxon>
        <taxon>Homo</taxon>
    </lineage>
</organism>
<evidence type="ECO:0000250" key="1">
    <source>
        <dbReference type="UniProtKB" id="Q3UA06"/>
    </source>
</evidence>
<evidence type="ECO:0000255" key="2"/>
<evidence type="ECO:0000269" key="3">
    <source>
    </source>
</evidence>
<evidence type="ECO:0000269" key="4">
    <source>
    </source>
</evidence>
<evidence type="ECO:0000269" key="5">
    <source>
    </source>
</evidence>
<evidence type="ECO:0000269" key="6">
    <source>
    </source>
</evidence>
<evidence type="ECO:0000303" key="7">
    <source>
    </source>
</evidence>
<evidence type="ECO:0000305" key="8"/>
<evidence type="ECO:0007744" key="9">
    <source>
    </source>
</evidence>
<evidence type="ECO:0007744" key="10">
    <source>
    </source>
</evidence>
<evidence type="ECO:0007829" key="11">
    <source>
        <dbReference type="PDB" id="5VQA"/>
    </source>
</evidence>
<evidence type="ECO:0007829" key="12">
    <source>
        <dbReference type="PDB" id="5WC2"/>
    </source>
</evidence>
<keyword id="KW-0002">3D-structure</keyword>
<keyword id="KW-0007">Acetylation</keyword>
<keyword id="KW-0025">Alternative splicing</keyword>
<keyword id="KW-0067">ATP-binding</keyword>
<keyword id="KW-0221">Differentiation</keyword>
<keyword id="KW-0225">Disease variant</keyword>
<keyword id="KW-0469">Meiosis</keyword>
<keyword id="KW-0547">Nucleotide-binding</keyword>
<keyword id="KW-0896">Oogenesis</keyword>
<keyword id="KW-1267">Proteomics identification</keyword>
<keyword id="KW-1185">Reference proteome</keyword>
<keyword id="KW-0744">Spermatogenesis</keyword>
<reference key="1">
    <citation type="journal article" date="1997" name="J. Virol.">
        <title>Two classes of human papillomavirus type 16 E1 mutants suggest pleiotropic conformational constraints affecting E1 multimerization, E2 interaction, and interaction with cellular proteins.</title>
        <authorList>
            <person name="Yasugi T."/>
            <person name="Vidal M."/>
            <person name="Sakai H."/>
            <person name="Howley P.M."/>
            <person name="Benson J.D."/>
        </authorList>
    </citation>
    <scope>NUCLEOTIDE SEQUENCE [MRNA] (ISOFORM 1)</scope>
    <scope>INTERACTION WITH HPV16 E1</scope>
</reference>
<reference key="2">
    <citation type="submission" date="2004-06" db="EMBL/GenBank/DDBJ databases">
        <title>Cloning of human full open reading frames in Gateway(TM) system entry vector (pDONR201).</title>
        <authorList>
            <person name="Ebert L."/>
            <person name="Schick M."/>
            <person name="Neubert P."/>
            <person name="Schatten R."/>
            <person name="Henze S."/>
            <person name="Korn B."/>
        </authorList>
    </citation>
    <scope>NUCLEOTIDE SEQUENCE [LARGE SCALE MRNA] (ISOFORM 1)</scope>
</reference>
<reference key="3">
    <citation type="submission" date="2005-09" db="EMBL/GenBank/DDBJ databases">
        <authorList>
            <person name="Mural R.J."/>
            <person name="Istrail S."/>
            <person name="Sutton G.G."/>
            <person name="Florea L."/>
            <person name="Halpern A.L."/>
            <person name="Mobarry C.M."/>
            <person name="Lippert R."/>
            <person name="Walenz B."/>
            <person name="Shatkay H."/>
            <person name="Dew I."/>
            <person name="Miller J.R."/>
            <person name="Flanigan M.J."/>
            <person name="Edwards N.J."/>
            <person name="Bolanos R."/>
            <person name="Fasulo D."/>
            <person name="Halldorsson B.V."/>
            <person name="Hannenhalli S."/>
            <person name="Turner R."/>
            <person name="Yooseph S."/>
            <person name="Lu F."/>
            <person name="Nusskern D.R."/>
            <person name="Shue B.C."/>
            <person name="Zheng X.H."/>
            <person name="Zhong F."/>
            <person name="Delcher A.L."/>
            <person name="Huson D.H."/>
            <person name="Kravitz S.A."/>
            <person name="Mouchard L."/>
            <person name="Reinert K."/>
            <person name="Remington K.A."/>
            <person name="Clark A.G."/>
            <person name="Waterman M.S."/>
            <person name="Eichler E.E."/>
            <person name="Adams M.D."/>
            <person name="Hunkapiller M.W."/>
            <person name="Myers E.W."/>
            <person name="Venter J.C."/>
        </authorList>
    </citation>
    <scope>NUCLEOTIDE SEQUENCE [LARGE SCALE GENOMIC DNA]</scope>
</reference>
<reference key="4">
    <citation type="journal article" date="2004" name="Genome Res.">
        <title>The status, quality, and expansion of the NIH full-length cDNA project: the Mammalian Gene Collection (MGC).</title>
        <authorList>
            <consortium name="The MGC Project Team"/>
        </authorList>
    </citation>
    <scope>NUCLEOTIDE SEQUENCE [LARGE SCALE MRNA] (ISOFORM 1)</scope>
    <source>
        <tissue>Lung</tissue>
    </source>
</reference>
<reference key="5">
    <citation type="journal article" date="1995" name="Mol. Endocrinol.">
        <title>Two classes of proteins dependent on either the presence or absence of thyroid hormone for interaction with the thyroid hormone receptor.</title>
        <authorList>
            <person name="Lee J.W."/>
            <person name="Choi H.-S."/>
            <person name="Gyuris J."/>
            <person name="Brent R."/>
            <person name="Moore D.D."/>
        </authorList>
    </citation>
    <scope>NUCLEOTIDE SEQUENCE [MRNA] OF 1-417 (ISOFORM 2)</scope>
    <scope>INTERACTION WITH THRA</scope>
</reference>
<reference key="6">
    <citation type="journal article" date="2005" name="Nat. Biotechnol.">
        <title>Immunoaffinity profiling of tyrosine phosphorylation in cancer cells.</title>
        <authorList>
            <person name="Rush J."/>
            <person name="Moritz A."/>
            <person name="Lee K.A."/>
            <person name="Guo A."/>
            <person name="Goss V.L."/>
            <person name="Spek E.J."/>
            <person name="Zhang H."/>
            <person name="Zha X.-M."/>
            <person name="Polakiewicz R.D."/>
            <person name="Comb M.J."/>
        </authorList>
    </citation>
    <scope>IDENTIFICATION BY MASS SPECTROMETRY [LARGE SCALE ANALYSIS]</scope>
</reference>
<reference key="7">
    <citation type="journal article" date="2006" name="Cell">
        <title>Global, in vivo, and site-specific phosphorylation dynamics in signaling networks.</title>
        <authorList>
            <person name="Olsen J.V."/>
            <person name="Blagoev B."/>
            <person name="Gnad F."/>
            <person name="Macek B."/>
            <person name="Kumar C."/>
            <person name="Mortensen P."/>
            <person name="Mann M."/>
        </authorList>
    </citation>
    <scope>IDENTIFICATION BY MASS SPECTROMETRY [LARGE SCALE ANALYSIS]</scope>
    <source>
        <tissue>Cervix carcinoma</tissue>
    </source>
</reference>
<reference key="8">
    <citation type="journal article" date="2008" name="Mol. Cell">
        <title>Kinase-selective enrichment enables quantitative phosphoproteomics of the kinome across the cell cycle.</title>
        <authorList>
            <person name="Daub H."/>
            <person name="Olsen J.V."/>
            <person name="Bairlein M."/>
            <person name="Gnad F."/>
            <person name="Oppermann F.S."/>
            <person name="Korner R."/>
            <person name="Greff Z."/>
            <person name="Keri G."/>
            <person name="Stemmann O."/>
            <person name="Mann M."/>
        </authorList>
    </citation>
    <scope>IDENTIFICATION BY MASS SPECTROMETRY [LARGE SCALE ANALYSIS]</scope>
    <source>
        <tissue>Cervix carcinoma</tissue>
    </source>
</reference>
<reference key="9">
    <citation type="journal article" date="2009" name="Anal. Chem.">
        <title>Lys-N and trypsin cover complementary parts of the phosphoproteome in a refined SCX-based approach.</title>
        <authorList>
            <person name="Gauci S."/>
            <person name="Helbig A.O."/>
            <person name="Slijper M."/>
            <person name="Krijgsveld J."/>
            <person name="Heck A.J."/>
            <person name="Mohammed S."/>
        </authorList>
    </citation>
    <scope>ACETYLATION [LARGE SCALE ANALYSIS] AT MET-1</scope>
    <scope>IDENTIFICATION BY MASS SPECTROMETRY [LARGE SCALE ANALYSIS]</scope>
</reference>
<reference key="10">
    <citation type="journal article" date="2010" name="Sci. Signal.">
        <title>Quantitative phosphoproteomics reveals widespread full phosphorylation site occupancy during mitosis.</title>
        <authorList>
            <person name="Olsen J.V."/>
            <person name="Vermeulen M."/>
            <person name="Santamaria A."/>
            <person name="Kumar C."/>
            <person name="Miller M.L."/>
            <person name="Jensen L.J."/>
            <person name="Gnad F."/>
            <person name="Cox J."/>
            <person name="Jensen T.S."/>
            <person name="Nigg E.A."/>
            <person name="Brunak S."/>
            <person name="Mann M."/>
        </authorList>
    </citation>
    <scope>IDENTIFICATION BY MASS SPECTROMETRY [LARGE SCALE ANALYSIS]</scope>
    <source>
        <tissue>Cervix carcinoma</tissue>
    </source>
</reference>
<reference key="11">
    <citation type="journal article" date="2011" name="BMC Syst. Biol.">
        <title>Initial characterization of the human central proteome.</title>
        <authorList>
            <person name="Burkard T.R."/>
            <person name="Planyavsky M."/>
            <person name="Kaupe I."/>
            <person name="Breitwieser F.P."/>
            <person name="Buerckstuemmer T."/>
            <person name="Bennett K.L."/>
            <person name="Superti-Furga G."/>
            <person name="Colinge J."/>
        </authorList>
    </citation>
    <scope>IDENTIFICATION BY MASS SPECTROMETRY [LARGE SCALE ANALYSIS]</scope>
</reference>
<reference key="12">
    <citation type="journal article" date="2012" name="Mol. Cell. Proteomics">
        <title>Comparative large-scale characterisation of plant vs. mammal proteins reveals similar and idiosyncratic N-alpha acetylation features.</title>
        <authorList>
            <person name="Bienvenut W.V."/>
            <person name="Sumpton D."/>
            <person name="Martinez A."/>
            <person name="Lilla S."/>
            <person name="Espagne C."/>
            <person name="Meinnel T."/>
            <person name="Giglione C."/>
        </authorList>
    </citation>
    <scope>ACETYLATION [LARGE SCALE ANALYSIS] AT MET-1</scope>
    <scope>IDENTIFICATION BY MASS SPECTROMETRY [LARGE SCALE ANALYSIS]</scope>
</reference>
<reference key="13">
    <citation type="journal article" date="2017" name="Nat. Genet.">
        <title>Biallelic TRIP13 mutations predispose to Wilms tumor and chromosome missegregation.</title>
        <authorList>
            <person name="Yost S."/>
            <person name="de Wolf B."/>
            <person name="Hanks S."/>
            <person name="Zachariou A."/>
            <person name="Marcozzi C."/>
            <person name="Clarke M."/>
            <person name="de Voer R."/>
            <person name="Etemad B."/>
            <person name="Uijttewaal E."/>
            <person name="Ramsay E."/>
            <person name="Wylie H."/>
            <person name="Elliott A."/>
            <person name="Picton S."/>
            <person name="Smith A."/>
            <person name="Smithson S."/>
            <person name="Seal S."/>
            <person name="Ruark E."/>
            <person name="Houge G."/>
            <person name="Pines J."/>
            <person name="Kops G.J.P.L."/>
            <person name="Rahman N."/>
        </authorList>
    </citation>
    <scope>VARIANT MVA3 354-ARG--ILE-432 DEL</scope>
    <scope>CHARACTERIZATION OF VARIANT MVA3 354-ARG--ILE-432 DEL</scope>
    <scope>FUNCTION</scope>
</reference>
<reference key="14">
    <citation type="journal article" date="2020" name="Am. J. Hum. Genet.">
        <title>Bi-allelic missense pathogenic variants in TRIP13 cause female infertility characterized by oocyte maturation arrest.</title>
        <authorList>
            <person name="Zhang Z."/>
            <person name="Li B."/>
            <person name="Fu J."/>
            <person name="Li R."/>
            <person name="Diao F."/>
            <person name="Li C."/>
            <person name="Chen B."/>
            <person name="Du J."/>
            <person name="Zhou Z."/>
            <person name="Mu J."/>
            <person name="Yan Z."/>
            <person name="Wu L."/>
            <person name="Liu S."/>
            <person name="Wang W."/>
            <person name="Zhao L."/>
            <person name="Dong J."/>
            <person name="He L."/>
            <person name="Liang X."/>
            <person name="Kuang Y."/>
            <person name="Sun X."/>
            <person name="Sang Q."/>
            <person name="Wang L."/>
        </authorList>
    </citation>
    <scope>VARIANTS OZEMA9 ARG-26; GLN-173; VAL-198; MET-247 AND LYS-303</scope>
    <scope>CHARACTERIZATION OF VARIANT OZEMA9 ARG-26</scope>
    <scope>INVOLVEMENT IN OZEMA9</scope>
</reference>
<feature type="chain" id="PRO_0000084782" description="Pachytene checkpoint protein 2 homolog">
    <location>
        <begin position="1"/>
        <end position="432"/>
    </location>
</feature>
<feature type="binding site" evidence="2">
    <location>
        <begin position="179"/>
        <end position="186"/>
    </location>
    <ligand>
        <name>ATP</name>
        <dbReference type="ChEBI" id="CHEBI:30616"/>
    </ligand>
</feature>
<feature type="modified residue" description="N-acetylmethionine" evidence="9 10">
    <location>
        <position position="1"/>
    </location>
</feature>
<feature type="splice variant" id="VSP_016957" description="In isoform 2." evidence="7">
    <location>
        <begin position="171"/>
        <end position="406"/>
    </location>
</feature>
<feature type="sequence variant" id="VAR_084761" description="In OZEMA9; decreased protein level in patient cells; dbSNP:rs780778324." evidence="4">
    <original>H</original>
    <variation>R</variation>
    <location>
        <position position="26"/>
    </location>
</feature>
<feature type="sequence variant" id="VAR_084762" description="In OZEMA9; uncertain significance; dbSNP:rs759712974." evidence="4">
    <original>R</original>
    <variation>Q</variation>
    <location>
        <position position="173"/>
    </location>
</feature>
<feature type="sequence variant" id="VAR_084763" description="In OZEMA9; uncertain significance; dbSNP:rs1754056948." evidence="4">
    <original>I</original>
    <variation>V</variation>
    <location>
        <position position="198"/>
    </location>
</feature>
<feature type="sequence variant" id="VAR_084764" description="In OZEMA9; uncertain significance; dbSNP:rs1203102465." evidence="4">
    <original>V</original>
    <variation>M</variation>
    <location>
        <position position="247"/>
    </location>
</feature>
<feature type="sequence variant" id="VAR_084765" description="In OZEMA9; uncertain significance; dbSNP:rs772834014." evidence="4">
    <original>E</original>
    <variation>K</variation>
    <location>
        <position position="303"/>
    </location>
</feature>
<feature type="sequence variant" id="VAR_079275" description="In MVA3; loss of protein expression; impairment of spindle assembly checkpoint." evidence="3">
    <location>
        <begin position="354"/>
        <end position="432"/>
    </location>
</feature>
<feature type="strand" evidence="12">
    <location>
        <begin position="20"/>
        <end position="27"/>
    </location>
</feature>
<feature type="helix" evidence="12">
    <location>
        <begin position="35"/>
        <end position="49"/>
    </location>
</feature>
<feature type="strand" evidence="11">
    <location>
        <begin position="57"/>
        <end position="59"/>
    </location>
</feature>
<feature type="helix" evidence="12">
    <location>
        <begin position="64"/>
        <end position="69"/>
    </location>
</feature>
<feature type="strand" evidence="12">
    <location>
        <begin position="70"/>
        <end position="76"/>
    </location>
</feature>
<feature type="strand" evidence="12">
    <location>
        <begin position="93"/>
        <end position="101"/>
    </location>
</feature>
<feature type="strand" evidence="12">
    <location>
        <begin position="122"/>
        <end position="129"/>
    </location>
</feature>
<feature type="helix" evidence="12">
    <location>
        <begin position="130"/>
        <end position="132"/>
    </location>
</feature>
<feature type="helix" evidence="12">
    <location>
        <begin position="135"/>
        <end position="138"/>
    </location>
</feature>
<feature type="helix" evidence="12">
    <location>
        <begin position="145"/>
        <end position="161"/>
    </location>
</feature>
<feature type="turn" evidence="12">
    <location>
        <begin position="166"/>
        <end position="168"/>
    </location>
</feature>
<feature type="strand" evidence="12">
    <location>
        <begin position="173"/>
        <end position="178"/>
    </location>
</feature>
<feature type="helix" evidence="12">
    <location>
        <begin position="185"/>
        <end position="199"/>
    </location>
</feature>
<feature type="turn" evidence="12">
    <location>
        <begin position="200"/>
        <end position="203"/>
    </location>
</feature>
<feature type="strand" evidence="12">
    <location>
        <begin position="205"/>
        <end position="212"/>
    </location>
</feature>
<feature type="helix" evidence="12">
    <location>
        <begin position="229"/>
        <end position="240"/>
    </location>
</feature>
<feature type="strand" evidence="12">
    <location>
        <begin position="245"/>
        <end position="251"/>
    </location>
</feature>
<feature type="turn" evidence="12">
    <location>
        <begin position="252"/>
        <end position="254"/>
    </location>
</feature>
<feature type="helix" evidence="12">
    <location>
        <begin position="255"/>
        <end position="259"/>
    </location>
</feature>
<feature type="helix" evidence="12">
    <location>
        <begin position="273"/>
        <end position="287"/>
    </location>
</feature>
<feature type="strand" evidence="12">
    <location>
        <begin position="293"/>
        <end position="300"/>
    </location>
</feature>
<feature type="strand" evidence="11">
    <location>
        <begin position="302"/>
        <end position="304"/>
    </location>
</feature>
<feature type="helix" evidence="12">
    <location>
        <begin position="308"/>
        <end position="311"/>
    </location>
</feature>
<feature type="strand" evidence="12">
    <location>
        <begin position="314"/>
        <end position="318"/>
    </location>
</feature>
<feature type="helix" evidence="12">
    <location>
        <begin position="324"/>
        <end position="340"/>
    </location>
</feature>
<feature type="helix" evidence="12">
    <location>
        <begin position="353"/>
        <end position="358"/>
    </location>
</feature>
<feature type="turn" evidence="12">
    <location>
        <begin position="359"/>
        <end position="361"/>
    </location>
</feature>
<feature type="turn" evidence="12">
    <location>
        <begin position="365"/>
        <end position="367"/>
    </location>
</feature>
<feature type="helix" evidence="12">
    <location>
        <begin position="368"/>
        <end position="379"/>
    </location>
</feature>
<feature type="turn" evidence="12">
    <location>
        <begin position="380"/>
        <end position="382"/>
    </location>
</feature>
<feature type="helix" evidence="12">
    <location>
        <begin position="385"/>
        <end position="399"/>
    </location>
</feature>
<feature type="helix" evidence="12">
    <location>
        <begin position="407"/>
        <end position="428"/>
    </location>
</feature>
<name>PCH2_HUMAN</name>
<accession>Q15645</accession>
<accession>C9K0T3</accession>
<accession>D3DTC0</accession>
<accession>O15324</accession>
<dbReference type="EMBL" id="U96131">
    <property type="protein sequence ID" value="AAB64095.1"/>
    <property type="molecule type" value="mRNA"/>
</dbReference>
<dbReference type="EMBL" id="CR456744">
    <property type="protein sequence ID" value="CAG33025.1"/>
    <property type="molecule type" value="mRNA"/>
</dbReference>
<dbReference type="EMBL" id="AC122719">
    <property type="status" value="NOT_ANNOTATED_CDS"/>
    <property type="molecule type" value="Genomic_DNA"/>
</dbReference>
<dbReference type="EMBL" id="CH471102">
    <property type="protein sequence ID" value="EAX08185.1"/>
    <property type="molecule type" value="Genomic_DNA"/>
</dbReference>
<dbReference type="EMBL" id="CH471102">
    <property type="protein sequence ID" value="EAX08186.1"/>
    <property type="molecule type" value="Genomic_DNA"/>
</dbReference>
<dbReference type="EMBL" id="BC000404">
    <property type="protein sequence ID" value="AAH00404.1"/>
    <property type="molecule type" value="mRNA"/>
</dbReference>
<dbReference type="EMBL" id="BC019294">
    <property type="protein sequence ID" value="AAH19294.1"/>
    <property type="molecule type" value="mRNA"/>
</dbReference>
<dbReference type="EMBL" id="L40384">
    <property type="protein sequence ID" value="AAC41732.1"/>
    <property type="status" value="ALT_FRAME"/>
    <property type="molecule type" value="mRNA"/>
</dbReference>
<dbReference type="CCDS" id="CCDS3858.1">
    <molecule id="Q15645-1"/>
</dbReference>
<dbReference type="RefSeq" id="NP_004228.1">
    <molecule id="Q15645-1"/>
    <property type="nucleotide sequence ID" value="NM_004237.4"/>
</dbReference>
<dbReference type="RefSeq" id="XP_011512465.1">
    <molecule id="Q15645-1"/>
    <property type="nucleotide sequence ID" value="XM_011514163.2"/>
</dbReference>
<dbReference type="RefSeq" id="XP_054209776.1">
    <molecule id="Q15645-1"/>
    <property type="nucleotide sequence ID" value="XM_054353801.1"/>
</dbReference>
<dbReference type="PDB" id="5VQ9">
    <property type="method" value="X-ray"/>
    <property type="resolution" value="3.02 A"/>
    <property type="chains" value="D=1-432"/>
</dbReference>
<dbReference type="PDB" id="5VQA">
    <property type="method" value="X-ray"/>
    <property type="resolution" value="2.54 A"/>
    <property type="chains" value="A=1-432"/>
</dbReference>
<dbReference type="PDB" id="5WC2">
    <property type="method" value="X-ray"/>
    <property type="resolution" value="2.50 A"/>
    <property type="chains" value="A=1-432"/>
</dbReference>
<dbReference type="PDB" id="6F0X">
    <property type="method" value="EM"/>
    <property type="resolution" value="4.60 A"/>
    <property type="chains" value="A/B/C/D/E/F=1-432"/>
</dbReference>
<dbReference type="PDB" id="6LK0">
    <property type="method" value="X-ray"/>
    <property type="resolution" value="2.60 A"/>
    <property type="chains" value="A=1-432"/>
</dbReference>
<dbReference type="PDB" id="7L9P">
    <property type="method" value="EM"/>
    <property type="resolution" value="3.60 A"/>
    <property type="chains" value="A/B/C/D/E/F=2-432"/>
</dbReference>
<dbReference type="PDBsum" id="5VQ9"/>
<dbReference type="PDBsum" id="5VQA"/>
<dbReference type="PDBsum" id="5WC2"/>
<dbReference type="PDBsum" id="6F0X"/>
<dbReference type="PDBsum" id="6LK0"/>
<dbReference type="PDBsum" id="7L9P"/>
<dbReference type="EMDB" id="EMD-23244"/>
<dbReference type="EMDB" id="EMD-4166"/>
<dbReference type="SMR" id="Q15645"/>
<dbReference type="BioGRID" id="114730">
    <property type="interactions" value="314"/>
</dbReference>
<dbReference type="DIP" id="DIP-34493N"/>
<dbReference type="FunCoup" id="Q15645">
    <property type="interactions" value="2561"/>
</dbReference>
<dbReference type="IntAct" id="Q15645">
    <property type="interactions" value="185"/>
</dbReference>
<dbReference type="MINT" id="Q15645"/>
<dbReference type="STRING" id="9606.ENSP00000166345"/>
<dbReference type="BindingDB" id="Q15645"/>
<dbReference type="ChEMBL" id="CHEMBL5465278"/>
<dbReference type="GlyGen" id="Q15645">
    <property type="glycosylation" value="5 sites, 1 N-linked glycan (1 site), 1 O-linked glycan (4 sites)"/>
</dbReference>
<dbReference type="iPTMnet" id="Q15645"/>
<dbReference type="MetOSite" id="Q15645"/>
<dbReference type="PhosphoSitePlus" id="Q15645"/>
<dbReference type="SwissPalm" id="Q15645"/>
<dbReference type="BioMuta" id="TRIP13"/>
<dbReference type="DMDM" id="85541056"/>
<dbReference type="jPOST" id="Q15645"/>
<dbReference type="MassIVE" id="Q15645"/>
<dbReference type="PaxDb" id="9606-ENSP00000166345"/>
<dbReference type="PeptideAtlas" id="Q15645"/>
<dbReference type="ProteomicsDB" id="60681">
    <molecule id="Q15645-1"/>
</dbReference>
<dbReference type="ProteomicsDB" id="60682">
    <molecule id="Q15645-2"/>
</dbReference>
<dbReference type="Pumba" id="Q15645"/>
<dbReference type="Antibodypedia" id="8906">
    <property type="antibodies" value="324 antibodies from 33 providers"/>
</dbReference>
<dbReference type="DNASU" id="9319"/>
<dbReference type="Ensembl" id="ENST00000166345.8">
    <molecule id="Q15645-1"/>
    <property type="protein sequence ID" value="ENSP00000166345.3"/>
    <property type="gene ID" value="ENSG00000071539.14"/>
</dbReference>
<dbReference type="GeneID" id="9319"/>
<dbReference type="KEGG" id="hsa:9319"/>
<dbReference type="MANE-Select" id="ENST00000166345.8">
    <property type="protein sequence ID" value="ENSP00000166345.3"/>
    <property type="RefSeq nucleotide sequence ID" value="NM_004237.4"/>
    <property type="RefSeq protein sequence ID" value="NP_004228.1"/>
</dbReference>
<dbReference type="UCSC" id="uc003jbr.4">
    <molecule id="Q15645-1"/>
    <property type="organism name" value="human"/>
</dbReference>
<dbReference type="AGR" id="HGNC:12307"/>
<dbReference type="CTD" id="9319"/>
<dbReference type="DisGeNET" id="9319"/>
<dbReference type="GeneCards" id="TRIP13"/>
<dbReference type="HGNC" id="HGNC:12307">
    <property type="gene designation" value="TRIP13"/>
</dbReference>
<dbReference type="HPA" id="ENSG00000071539">
    <property type="expression patterns" value="Tissue enhanced (testis)"/>
</dbReference>
<dbReference type="MalaCards" id="TRIP13"/>
<dbReference type="MIM" id="604507">
    <property type="type" value="gene"/>
</dbReference>
<dbReference type="MIM" id="617598">
    <property type="type" value="phenotype"/>
</dbReference>
<dbReference type="MIM" id="619011">
    <property type="type" value="phenotype"/>
</dbReference>
<dbReference type="neXtProt" id="NX_Q15645"/>
<dbReference type="OpenTargets" id="ENSG00000071539"/>
<dbReference type="Orphanet" id="1052">
    <property type="disease" value="Mosaic variegated aneuploidy syndrome"/>
</dbReference>
<dbReference type="Orphanet" id="654">
    <property type="disease" value="Nephroblastoma"/>
</dbReference>
<dbReference type="PharmGKB" id="PA36986"/>
<dbReference type="VEuPathDB" id="HostDB:ENSG00000071539"/>
<dbReference type="eggNOG" id="KOG0744">
    <property type="taxonomic scope" value="Eukaryota"/>
</dbReference>
<dbReference type="GeneTree" id="ENSGT00390000017432"/>
<dbReference type="HOGENOM" id="CLU_028208_0_1_1"/>
<dbReference type="InParanoid" id="Q15645"/>
<dbReference type="OMA" id="NVCDSVQ"/>
<dbReference type="OrthoDB" id="10042665at2759"/>
<dbReference type="PAN-GO" id="Q15645">
    <property type="GO annotations" value="4 GO annotations based on evolutionary models"/>
</dbReference>
<dbReference type="PhylomeDB" id="Q15645"/>
<dbReference type="TreeFam" id="TF313507"/>
<dbReference type="PathwayCommons" id="Q15645"/>
<dbReference type="SignaLink" id="Q15645"/>
<dbReference type="SIGNOR" id="Q15645"/>
<dbReference type="BioGRID-ORCS" id="9319">
    <property type="hits" value="206 hits in 1169 CRISPR screens"/>
</dbReference>
<dbReference type="ChiTaRS" id="TRIP13">
    <property type="organism name" value="human"/>
</dbReference>
<dbReference type="GeneWiki" id="TRIP13"/>
<dbReference type="GenomeRNAi" id="9319"/>
<dbReference type="Pharos" id="Q15645">
    <property type="development level" value="Tbio"/>
</dbReference>
<dbReference type="PRO" id="PR:Q15645"/>
<dbReference type="Proteomes" id="UP000005640">
    <property type="component" value="Chromosome 5"/>
</dbReference>
<dbReference type="RNAct" id="Q15645">
    <property type="molecule type" value="protein"/>
</dbReference>
<dbReference type="Bgee" id="ENSG00000071539">
    <property type="expression patterns" value="Expressed in bronchial epithelial cell and 141 other cell types or tissues"/>
</dbReference>
<dbReference type="ExpressionAtlas" id="Q15645">
    <property type="expression patterns" value="baseline and differential"/>
</dbReference>
<dbReference type="GO" id="GO:0005694">
    <property type="term" value="C:chromosome"/>
    <property type="evidence" value="ECO:0000318"/>
    <property type="project" value="GO_Central"/>
</dbReference>
<dbReference type="GO" id="GO:0001673">
    <property type="term" value="C:male germ cell nucleus"/>
    <property type="evidence" value="ECO:0007669"/>
    <property type="project" value="Ensembl"/>
</dbReference>
<dbReference type="GO" id="GO:0005634">
    <property type="term" value="C:nucleus"/>
    <property type="evidence" value="ECO:0000318"/>
    <property type="project" value="GO_Central"/>
</dbReference>
<dbReference type="GO" id="GO:0005524">
    <property type="term" value="F:ATP binding"/>
    <property type="evidence" value="ECO:0000303"/>
    <property type="project" value="UniProtKB"/>
</dbReference>
<dbReference type="GO" id="GO:0016887">
    <property type="term" value="F:ATP hydrolysis activity"/>
    <property type="evidence" value="ECO:0007669"/>
    <property type="project" value="InterPro"/>
</dbReference>
<dbReference type="GO" id="GO:0042802">
    <property type="term" value="F:identical protein binding"/>
    <property type="evidence" value="ECO:0000353"/>
    <property type="project" value="IntAct"/>
</dbReference>
<dbReference type="GO" id="GO:0003712">
    <property type="term" value="F:transcription coregulator activity"/>
    <property type="evidence" value="ECO:0000304"/>
    <property type="project" value="ProtInc"/>
</dbReference>
<dbReference type="GO" id="GO:0006302">
    <property type="term" value="P:double-strand break repair"/>
    <property type="evidence" value="ECO:0000250"/>
    <property type="project" value="UniProtKB"/>
</dbReference>
<dbReference type="GO" id="GO:0007144">
    <property type="term" value="P:female meiosis I"/>
    <property type="evidence" value="ECO:0007669"/>
    <property type="project" value="Ensembl"/>
</dbReference>
<dbReference type="GO" id="GO:0007141">
    <property type="term" value="P:male meiosis I"/>
    <property type="evidence" value="ECO:0007669"/>
    <property type="project" value="Ensembl"/>
</dbReference>
<dbReference type="GO" id="GO:0051598">
    <property type="term" value="P:meiotic recombination checkpoint signaling"/>
    <property type="evidence" value="ECO:0000318"/>
    <property type="project" value="GO_Central"/>
</dbReference>
<dbReference type="GO" id="GO:0007094">
    <property type="term" value="P:mitotic spindle assembly checkpoint signaling"/>
    <property type="evidence" value="ECO:0000315"/>
    <property type="project" value="UniProtKB"/>
</dbReference>
<dbReference type="GO" id="GO:0001556">
    <property type="term" value="P:oocyte maturation"/>
    <property type="evidence" value="ECO:0007669"/>
    <property type="project" value="Ensembl"/>
</dbReference>
<dbReference type="GO" id="GO:0048477">
    <property type="term" value="P:oogenesis"/>
    <property type="evidence" value="ECO:0000250"/>
    <property type="project" value="UniProtKB"/>
</dbReference>
<dbReference type="GO" id="GO:0007131">
    <property type="term" value="P:reciprocal meiotic recombination"/>
    <property type="evidence" value="ECO:0000250"/>
    <property type="project" value="UniProtKB"/>
</dbReference>
<dbReference type="GO" id="GO:0007286">
    <property type="term" value="P:spermatid development"/>
    <property type="evidence" value="ECO:0007669"/>
    <property type="project" value="Ensembl"/>
</dbReference>
<dbReference type="GO" id="GO:0007283">
    <property type="term" value="P:spermatogenesis"/>
    <property type="evidence" value="ECO:0000250"/>
    <property type="project" value="UniProtKB"/>
</dbReference>
<dbReference type="GO" id="GO:0007130">
    <property type="term" value="P:synaptonemal complex assembly"/>
    <property type="evidence" value="ECO:0000250"/>
    <property type="project" value="UniProtKB"/>
</dbReference>
<dbReference type="GO" id="GO:0006366">
    <property type="term" value="P:transcription by RNA polymerase II"/>
    <property type="evidence" value="ECO:0000304"/>
    <property type="project" value="ProtInc"/>
</dbReference>
<dbReference type="CDD" id="cd19508">
    <property type="entry name" value="RecA-like_Pch2-like"/>
    <property type="match status" value="1"/>
</dbReference>
<dbReference type="FunFam" id="3.40.50.300:FF:000662">
    <property type="entry name" value="Pachytene checkpoint protein 2 homolog"/>
    <property type="match status" value="1"/>
</dbReference>
<dbReference type="Gene3D" id="3.40.50.300">
    <property type="entry name" value="P-loop containing nucleotide triphosphate hydrolases"/>
    <property type="match status" value="1"/>
</dbReference>
<dbReference type="InterPro" id="IPR003593">
    <property type="entry name" value="AAA+_ATPase"/>
</dbReference>
<dbReference type="InterPro" id="IPR003959">
    <property type="entry name" value="ATPase_AAA_core"/>
</dbReference>
<dbReference type="InterPro" id="IPR003960">
    <property type="entry name" value="ATPase_AAA_CS"/>
</dbReference>
<dbReference type="InterPro" id="IPR001270">
    <property type="entry name" value="ClpA/B"/>
</dbReference>
<dbReference type="InterPro" id="IPR027417">
    <property type="entry name" value="P-loop_NTPase"/>
</dbReference>
<dbReference type="InterPro" id="IPR044539">
    <property type="entry name" value="Pch2-like"/>
</dbReference>
<dbReference type="PANTHER" id="PTHR45991">
    <property type="entry name" value="PACHYTENE CHECKPOINT PROTEIN 2"/>
    <property type="match status" value="1"/>
</dbReference>
<dbReference type="PANTHER" id="PTHR45991:SF1">
    <property type="entry name" value="PACHYTENE CHECKPOINT PROTEIN 2 HOMOLOG"/>
    <property type="match status" value="1"/>
</dbReference>
<dbReference type="Pfam" id="PF00004">
    <property type="entry name" value="AAA"/>
    <property type="match status" value="1"/>
</dbReference>
<dbReference type="Pfam" id="PF23242">
    <property type="entry name" value="AAA_lid_TRIP13_C"/>
    <property type="match status" value="1"/>
</dbReference>
<dbReference type="Pfam" id="PF23563">
    <property type="entry name" value="TRIP13_N"/>
    <property type="match status" value="1"/>
</dbReference>
<dbReference type="PRINTS" id="PR00300">
    <property type="entry name" value="CLPPROTEASEA"/>
</dbReference>
<dbReference type="SMART" id="SM00382">
    <property type="entry name" value="AAA"/>
    <property type="match status" value="1"/>
</dbReference>
<dbReference type="SUPFAM" id="SSF52540">
    <property type="entry name" value="P-loop containing nucleoside triphosphate hydrolases"/>
    <property type="match status" value="1"/>
</dbReference>
<dbReference type="PROSITE" id="PS00674">
    <property type="entry name" value="AAA"/>
    <property type="match status" value="1"/>
</dbReference>
<protein>
    <recommendedName>
        <fullName>Pachytene checkpoint protein 2 homolog</fullName>
    </recommendedName>
    <alternativeName>
        <fullName>Human papillomavirus type 16 E1 protein-binding protein</fullName>
        <shortName>16E1-BP</shortName>
        <shortName>HPV16 E1 protein-binding protein</shortName>
    </alternativeName>
    <alternativeName>
        <fullName>Thyroid hormone receptor interactor 13</fullName>
    </alternativeName>
    <alternativeName>
        <fullName>Thyroid receptor-interacting protein 13</fullName>
        <shortName>TR-interacting protein 13</shortName>
        <shortName>TRIP-13</shortName>
    </alternativeName>
</protein>
<gene>
    <name type="primary">TRIP13</name>
    <name type="synonym">PCH2</name>
</gene>
<proteinExistence type="evidence at protein level"/>
<comment type="function">
    <text evidence="1 3">Plays a key role in chromosome recombination and chromosome structure development during meiosis. Required at early steps in meiotic recombination that leads to non-crossovers pathways. Also needed for efficient completion of homologous synapsis by influencing crossover distribution along the chromosomes affecting both crossovers and non-crossovers pathways. Also required for development of higher-order chromosome structures and is needed for synaptonemal-complex formation. In males, required for efficient synapsis of the sex chromosomes and for sex body formation. Promotes early steps of the DNA double-strand breaks (DSBs) repair process upstream of the assembly of RAD51 complexes. Required for depletion of HORMAD1 and HORMAD2 from synapsed chromosomes (By similarity). Plays a role in mitotic spindle assembly checkpoint (SAC) activation (PubMed:28553959).</text>
</comment>
<comment type="subunit">
    <text evidence="1 5 6">Specifically interacts with the ligand binding domain of the thyroid receptor (TR). This interaction does not require the presence of thyroid hormone for its interaction. Interacts with HPV16 E1. Interacts with proteasome subunit PSMA8; to participate in meiosis progression during spermatogenesis (By similarity).</text>
</comment>
<comment type="interaction">
    <interactant intactId="EBI-358993">
        <id>Q15645</id>
    </interactant>
    <interactant intactId="EBI-11976299">
        <id>Q5BKX5-3</id>
        <label>ACTMAP</label>
    </interactant>
    <organismsDiffer>false</organismsDiffer>
    <experiments>3</experiments>
</comment>
<comment type="interaction">
    <interactant intactId="EBI-358993">
        <id>Q15645</id>
    </interactant>
    <interactant intactId="EBI-2798672">
        <id>Q9Y303</id>
        <label>AMDHD2</label>
    </interactant>
    <organismsDiffer>false</organismsDiffer>
    <experiments>3</experiments>
</comment>
<comment type="interaction">
    <interactant intactId="EBI-358993">
        <id>Q15645</id>
    </interactant>
    <interactant intactId="EBI-12323557">
        <id>Q9Y303-2</id>
        <label>AMDHD2</label>
    </interactant>
    <organismsDiffer>false</organismsDiffer>
    <experiments>3</experiments>
</comment>
<comment type="interaction">
    <interactant intactId="EBI-358993">
        <id>Q15645</id>
    </interactant>
    <interactant intactId="EBI-12102070">
        <id>Q9NXR5-2</id>
        <label>ANKRD10</label>
    </interactant>
    <organismsDiffer>false</organismsDiffer>
    <experiments>3</experiments>
</comment>
<comment type="interaction">
    <interactant intactId="EBI-358993">
        <id>Q15645</id>
    </interactant>
    <interactant intactId="EBI-751892">
        <id>Q969Q4</id>
        <label>ARL11</label>
    </interactant>
    <organismsDiffer>false</organismsDiffer>
    <experiments>4</experiments>
</comment>
<comment type="interaction">
    <interactant intactId="EBI-358993">
        <id>Q15645</id>
    </interactant>
    <interactant intactId="EBI-2117357">
        <id>P15289</id>
        <label>ARSA</label>
    </interactant>
    <organismsDiffer>false</organismsDiffer>
    <experiments>13</experiments>
</comment>
<comment type="interaction">
    <interactant intactId="EBI-358993">
        <id>Q15645</id>
    </interactant>
    <interactant intactId="EBI-12015080">
        <id>Q8WXK3-2</id>
        <label>ASB13</label>
    </interactant>
    <organismsDiffer>false</organismsDiffer>
    <experiments>3</experiments>
</comment>
<comment type="interaction">
    <interactant intactId="EBI-358993">
        <id>Q15645</id>
    </interactant>
    <interactant intactId="EBI-740204">
        <id>Q9H0W9</id>
        <label>C11orf54</label>
    </interactant>
    <organismsDiffer>false</organismsDiffer>
    <experiments>3</experiments>
</comment>
<comment type="interaction">
    <interactant intactId="EBI-358993">
        <id>Q15645</id>
    </interactant>
    <interactant intactId="EBI-12108466">
        <id>Q9H0W9-3</id>
        <label>C11orf54</label>
    </interactant>
    <organismsDiffer>false</organismsDiffer>
    <experiments>3</experiments>
</comment>
<comment type="interaction">
    <interactant intactId="EBI-358993">
        <id>Q15645</id>
    </interactant>
    <interactant intactId="EBI-10264911">
        <id>Q8N1A6</id>
        <label>C4orf33</label>
    </interactant>
    <organismsDiffer>false</organismsDiffer>
    <experiments>7</experiments>
</comment>
<comment type="interaction">
    <interactant intactId="EBI-358993">
        <id>Q15645</id>
    </interactant>
    <interactant intactId="EBI-1047601">
        <id>Q9Y2V0</id>
        <label>CDIN1</label>
    </interactant>
    <organismsDiffer>false</organismsDiffer>
    <experiments>3</experiments>
</comment>
<comment type="interaction">
    <interactant intactId="EBI-358993">
        <id>Q15645</id>
    </interactant>
    <interactant intactId="EBI-12950757">
        <id>Q9Y4F5-3</id>
        <label>CEP170B</label>
    </interactant>
    <organismsDiffer>false</organismsDiffer>
    <experiments>3</experiments>
</comment>
<comment type="interaction">
    <interactant intactId="EBI-358993">
        <id>Q15645</id>
    </interactant>
    <interactant intactId="EBI-16434710">
        <id>A0A0S2Z515</id>
        <label>CFP</label>
    </interactant>
    <organismsDiffer>false</organismsDiffer>
    <experiments>3</experiments>
</comment>
<comment type="interaction">
    <interactant intactId="EBI-358993">
        <id>Q15645</id>
    </interactant>
    <interactant intactId="EBI-5655540">
        <id>Q8N3C7</id>
        <label>CLIP4</label>
    </interactant>
    <organismsDiffer>false</organismsDiffer>
    <experiments>3</experiments>
</comment>
<comment type="interaction">
    <interactant intactId="EBI-358993">
        <id>Q15645</id>
    </interactant>
    <interactant intactId="EBI-372265">
        <id>P21964</id>
        <label>COMT</label>
    </interactant>
    <organismsDiffer>false</organismsDiffer>
    <experiments>3</experiments>
</comment>
<comment type="interaction">
    <interactant intactId="EBI-358993">
        <id>Q15645</id>
    </interactant>
    <interactant intactId="EBI-10200977">
        <id>P21964-2</id>
        <label>COMT</label>
    </interactant>
    <organismsDiffer>false</organismsDiffer>
    <experiments>3</experiments>
</comment>
<comment type="interaction">
    <interactant intactId="EBI-358993">
        <id>Q15645</id>
    </interactant>
    <interactant intactId="EBI-750444">
        <id>P53672</id>
        <label>CRYBA2</label>
    </interactant>
    <organismsDiffer>false</organismsDiffer>
    <experiments>5</experiments>
</comment>
<comment type="interaction">
    <interactant intactId="EBI-358993">
        <id>Q15645</id>
    </interactant>
    <interactant intactId="EBI-744761">
        <id>Q6BCY4</id>
        <label>CYB5R2</label>
    </interactant>
    <organismsDiffer>false</organismsDiffer>
    <experiments>4</experiments>
</comment>
<comment type="interaction">
    <interactant intactId="EBI-358993">
        <id>Q15645</id>
    </interactant>
    <interactant intactId="EBI-12102608">
        <id>Q6BCY4-2</id>
        <label>CYB5R2</label>
    </interactant>
    <organismsDiffer>false</organismsDiffer>
    <experiments>3</experiments>
</comment>
<comment type="interaction">
    <interactant intactId="EBI-358993">
        <id>Q15645</id>
    </interactant>
    <interactant intactId="EBI-12091947">
        <id>O75935-2</id>
        <label>DCTN3</label>
    </interactant>
    <organismsDiffer>false</organismsDiffer>
    <experiments>3</experiments>
</comment>
<comment type="interaction">
    <interactant intactId="EBI-358993">
        <id>Q15645</id>
    </interactant>
    <interactant intactId="EBI-749139">
        <id>O95865</id>
        <label>DDAH2</label>
    </interactant>
    <organismsDiffer>false</organismsDiffer>
    <experiments>6</experiments>
</comment>
<comment type="interaction">
    <interactant intactId="EBI-358993">
        <id>Q15645</id>
    </interactant>
    <interactant intactId="EBI-2564275">
        <id>Q14689</id>
        <label>DIP2A</label>
    </interactant>
    <organismsDiffer>false</organismsDiffer>
    <experiments>3</experiments>
</comment>
<comment type="interaction">
    <interactant intactId="EBI-358993">
        <id>Q15645</id>
    </interactant>
    <interactant intactId="EBI-10233719">
        <id>Q14689-6</id>
        <label>DIP2A</label>
    </interactant>
    <organismsDiffer>false</organismsDiffer>
    <experiments>3</experiments>
</comment>
<comment type="interaction">
    <interactant intactId="EBI-358993">
        <id>Q15645</id>
    </interactant>
    <interactant intactId="EBI-719542">
        <id>O14531</id>
        <label>DPYSL4</label>
    </interactant>
    <organismsDiffer>false</organismsDiffer>
    <experiments>3</experiments>
</comment>
<comment type="interaction">
    <interactant intactId="EBI-358993">
        <id>Q15645</id>
    </interactant>
    <interactant intactId="EBI-747840">
        <id>Q96G04</id>
        <label>EEF2KMT</label>
    </interactant>
    <organismsDiffer>false</organismsDiffer>
    <experiments>3</experiments>
</comment>
<comment type="interaction">
    <interactant intactId="EBI-358993">
        <id>Q15645</id>
    </interactant>
    <interactant intactId="EBI-947897">
        <id>Q9UBX5</id>
        <label>FBLN5</label>
    </interactant>
    <organismsDiffer>false</organismsDiffer>
    <experiments>3</experiments>
</comment>
<comment type="interaction">
    <interactant intactId="EBI-358993">
        <id>Q15645</id>
    </interactant>
    <interactant intactId="EBI-16434722">
        <id>A0A0S2Z576</id>
        <label>FBXO8</label>
    </interactant>
    <organismsDiffer>false</organismsDiffer>
    <experiments>3</experiments>
</comment>
<comment type="interaction">
    <interactant intactId="EBI-358993">
        <id>Q15645</id>
    </interactant>
    <interactant intactId="EBI-10242151">
        <id>Q53EP0-3</id>
        <label>FNDC3B</label>
    </interactant>
    <organismsDiffer>false</organismsDiffer>
    <experiments>6</experiments>
</comment>
<comment type="interaction">
    <interactant intactId="EBI-358993">
        <id>Q15645</id>
    </interactant>
    <interactant intactId="EBI-16434744">
        <id>A0A0S2Z4I0</id>
        <label>GALT</label>
    </interactant>
    <organismsDiffer>false</organismsDiffer>
    <experiments>3</experiments>
</comment>
<comment type="interaction">
    <interactant intactId="EBI-358993">
        <id>Q15645</id>
    </interactant>
    <interactant intactId="EBI-750827">
        <id>P07902</id>
        <label>GALT</label>
    </interactant>
    <organismsDiffer>false</organismsDiffer>
    <experiments>4</experiments>
</comment>
<comment type="interaction">
    <interactant intactId="EBI-358993">
        <id>Q15645</id>
    </interactant>
    <interactant intactId="EBI-748515">
        <id>Q8IVS8</id>
        <label>GLYCTK</label>
    </interactant>
    <organismsDiffer>false</organismsDiffer>
    <experiments>9</experiments>
</comment>
<comment type="interaction">
    <interactant intactId="EBI-358993">
        <id>Q15645</id>
    </interactant>
    <interactant intactId="EBI-745201">
        <id>Q9BSH5</id>
        <label>HDHD3</label>
    </interactant>
    <organismsDiffer>false</organismsDiffer>
    <experiments>6</experiments>
</comment>
<comment type="interaction">
    <interactant intactId="EBI-358993">
        <id>Q15645</id>
    </interactant>
    <interactant intactId="EBI-11955401">
        <id>Q86VF2-5</id>
        <label>IGFN1</label>
    </interactant>
    <organismsDiffer>false</organismsDiffer>
    <experiments>3</experiments>
</comment>
<comment type="interaction">
    <interactant intactId="EBI-358993">
        <id>Q15645</id>
    </interactant>
    <interactant intactId="EBI-2866779">
        <id>P14784</id>
        <label>IL2RB</label>
    </interactant>
    <organismsDiffer>false</organismsDiffer>
    <experiments>3</experiments>
</comment>
<comment type="interaction">
    <interactant intactId="EBI-358993">
        <id>Q15645</id>
    </interactant>
    <interactant intactId="EBI-6509505">
        <id>Q0VD86</id>
        <label>INCA1</label>
    </interactant>
    <organismsDiffer>false</organismsDiffer>
    <experiments>3</experiments>
</comment>
<comment type="interaction">
    <interactant intactId="EBI-358993">
        <id>Q15645</id>
    </interactant>
    <interactant intactId="EBI-10210845">
        <id>P59990</id>
        <label>KRTAP12-1</label>
    </interactant>
    <organismsDiffer>false</organismsDiffer>
    <experiments>6</experiments>
</comment>
<comment type="interaction">
    <interactant intactId="EBI-358993">
        <id>Q15645</id>
    </interactant>
    <interactant intactId="EBI-10176379">
        <id>P59991</id>
        <label>KRTAP12-2</label>
    </interactant>
    <organismsDiffer>false</organismsDiffer>
    <experiments>3</experiments>
</comment>
<comment type="interaction">
    <interactant intactId="EBI-358993">
        <id>Q15645</id>
    </interactant>
    <interactant intactId="EBI-10176396">
        <id>P60329</id>
        <label>KRTAP12-4</label>
    </interactant>
    <organismsDiffer>false</organismsDiffer>
    <experiments>3</experiments>
</comment>
<comment type="interaction">
    <interactant intactId="EBI-358993">
        <id>Q15645</id>
    </interactant>
    <interactant intactId="EBI-3957672">
        <id>Q6PEX3</id>
        <label>KRTAP26-1</label>
    </interactant>
    <organismsDiffer>false</organismsDiffer>
    <experiments>3</experiments>
</comment>
<comment type="interaction">
    <interactant intactId="EBI-358993">
        <id>Q15645</id>
    </interactant>
    <interactant intactId="EBI-12111050">
        <id>Q3LI64</id>
        <label>KRTAP6-1</label>
    </interactant>
    <organismsDiffer>false</organismsDiffer>
    <experiments>4</experiments>
</comment>
<comment type="interaction">
    <interactant intactId="EBI-358993">
        <id>Q15645</id>
    </interactant>
    <interactant intactId="EBI-11962084">
        <id>Q3LI66</id>
        <label>KRTAP6-2</label>
    </interactant>
    <organismsDiffer>false</organismsDiffer>
    <experiments>3</experiments>
</comment>
<comment type="interaction">
    <interactant intactId="EBI-358993">
        <id>Q15645</id>
    </interactant>
    <interactant intactId="EBI-10238309">
        <id>Q16773</id>
        <label>KYAT1</label>
    </interactant>
    <organismsDiffer>false</organismsDiffer>
    <experiments>3</experiments>
</comment>
<comment type="interaction">
    <interactant intactId="EBI-358993">
        <id>Q15645</id>
    </interactant>
    <interactant intactId="EBI-742828">
        <id>Q14847</id>
        <label>LASP1</label>
    </interactant>
    <organismsDiffer>false</organismsDiffer>
    <experiments>7</experiments>
</comment>
<comment type="interaction">
    <interactant intactId="EBI-358993">
        <id>Q15645</id>
    </interactant>
    <interactant intactId="EBI-9088686">
        <id>Q14847-2</id>
        <label>LASP1</label>
    </interactant>
    <organismsDiffer>false</organismsDiffer>
    <experiments>3</experiments>
</comment>
<comment type="interaction">
    <interactant intactId="EBI-358993">
        <id>Q15645</id>
    </interactant>
    <interactant intactId="EBI-739832">
        <id>Q8TBB1</id>
        <label>LNX1</label>
    </interactant>
    <organismsDiffer>false</organismsDiffer>
    <experiments>8</experiments>
</comment>
<comment type="interaction">
    <interactant intactId="EBI-358993">
        <id>Q15645</id>
    </interactant>
    <interactant intactId="EBI-749562">
        <id>Q96JB6</id>
        <label>LOXL4</label>
    </interactant>
    <organismsDiffer>false</organismsDiffer>
    <experiments>6</experiments>
</comment>
<comment type="interaction">
    <interactant intactId="EBI-358993">
        <id>Q15645</id>
    </interactant>
    <interactant intactId="EBI-2510106">
        <id>Q96L50</id>
        <label>LRR1</label>
    </interactant>
    <organismsDiffer>false</organismsDiffer>
    <experiments>3</experiments>
</comment>
<comment type="interaction">
    <interactant intactId="EBI-358993">
        <id>Q15645</id>
    </interactant>
    <interactant intactId="EBI-748182">
        <id>Q8TC57</id>
        <label>M1AP</label>
    </interactant>
    <organismsDiffer>false</organismsDiffer>
    <experiments>3</experiments>
</comment>
<comment type="interaction">
    <interactant intactId="EBI-358993">
        <id>Q15645</id>
    </interactant>
    <interactant intactId="EBI-712181">
        <id>Q15013</id>
        <label>MAD2L1BP</label>
    </interactant>
    <organismsDiffer>false</organismsDiffer>
    <experiments>9</experiments>
</comment>
<comment type="interaction">
    <interactant intactId="EBI-358993">
        <id>Q15645</id>
    </interactant>
    <interactant intactId="EBI-746504">
        <id>Q6P9B6</id>
        <label>MEAK7</label>
    </interactant>
    <organismsDiffer>false</organismsDiffer>
    <experiments>4</experiments>
</comment>
<comment type="interaction">
    <interactant intactId="EBI-358993">
        <id>Q15645</id>
    </interactant>
    <interactant intactId="EBI-10174029">
        <id>A6NJ78-4</id>
        <label>METTL15</label>
    </interactant>
    <organismsDiffer>false</organismsDiffer>
    <experiments>6</experiments>
</comment>
<comment type="interaction">
    <interactant intactId="EBI-358993">
        <id>Q15645</id>
    </interactant>
    <interactant intactId="EBI-9675802">
        <id>Q6PF18</id>
        <label>MORN3</label>
    </interactant>
    <organismsDiffer>false</organismsDiffer>
    <experiments>3</experiments>
</comment>
<comment type="interaction">
    <interactant intactId="EBI-358993">
        <id>Q15645</id>
    </interactant>
    <interactant intactId="EBI-2350461">
        <id>Q15777</id>
        <label>MPPED2</label>
    </interactant>
    <organismsDiffer>false</organismsDiffer>
    <experiments>8</experiments>
</comment>
<comment type="interaction">
    <interactant intactId="EBI-358993">
        <id>Q15645</id>
    </interactant>
    <interactant intactId="EBI-12260130">
        <id>Q96EZ4</id>
        <label>MYEOV</label>
    </interactant>
    <organismsDiffer>false</organismsDiffer>
    <experiments>3</experiments>
</comment>
<comment type="interaction">
    <interactant intactId="EBI-358993">
        <id>Q15645</id>
    </interactant>
    <interactant intactId="EBI-740897">
        <id>Q9GZT8</id>
        <label>NIF3L1</label>
    </interactant>
    <organismsDiffer>false</organismsDiffer>
    <experiments>3</experiments>
</comment>
<comment type="interaction">
    <interactant intactId="EBI-358993">
        <id>Q15645</id>
    </interactant>
    <interactant intactId="EBI-744871">
        <id>O00746</id>
        <label>NME4</label>
    </interactant>
    <organismsDiffer>false</organismsDiffer>
    <experiments>4</experiments>
</comment>
<comment type="interaction">
    <interactant intactId="EBI-358993">
        <id>Q15645</id>
    </interactant>
    <interactant intactId="EBI-741158">
        <id>Q96HA8</id>
        <label>NTAQ1</label>
    </interactant>
    <organismsDiffer>false</organismsDiffer>
    <experiments>3</experiments>
</comment>
<comment type="interaction">
    <interactant intactId="EBI-358993">
        <id>Q15645</id>
    </interactant>
    <interactant intactId="EBI-12111000">
        <id>P55771</id>
        <label>PAX9</label>
    </interactant>
    <organismsDiffer>false</organismsDiffer>
    <experiments>3</experiments>
</comment>
<comment type="interaction">
    <interactant intactId="EBI-358993">
        <id>Q15645</id>
    </interactant>
    <interactant intactId="EBI-750589">
        <id>P30039</id>
        <label>PBLD</label>
    </interactant>
    <organismsDiffer>false</organismsDiffer>
    <experiments>4</experiments>
</comment>
<comment type="interaction">
    <interactant intactId="EBI-358993">
        <id>Q15645</id>
    </interactant>
    <interactant intactId="EBI-10253759">
        <id>Q6PIM4</id>
        <label>PCMTD2</label>
    </interactant>
    <organismsDiffer>false</organismsDiffer>
    <experiments>3</experiments>
</comment>
<comment type="interaction">
    <interactant intactId="EBI-358993">
        <id>Q15645</id>
    </interactant>
    <interactant intactId="EBI-11956269">
        <id>Q92824-2</id>
        <label>PCSK5</label>
    </interactant>
    <organismsDiffer>false</organismsDiffer>
    <experiments>3</experiments>
</comment>
<comment type="interaction">
    <interactant intactId="EBI-358993">
        <id>Q15645</id>
    </interactant>
    <interactant intactId="EBI-448369">
        <id>Q96FA3</id>
        <label>PELI1</label>
    </interactant>
    <organismsDiffer>false</organismsDiffer>
    <experiments>3</experiments>
</comment>
<comment type="interaction">
    <interactant intactId="EBI-358993">
        <id>Q15645</id>
    </interactant>
    <interactant intactId="EBI-750734">
        <id>Q9NRY6</id>
        <label>PLSCR3</label>
    </interactant>
    <organismsDiffer>false</organismsDiffer>
    <experiments>7</experiments>
</comment>
<comment type="interaction">
    <interactant intactId="EBI-358993">
        <id>Q15645</id>
    </interactant>
    <interactant intactId="EBI-769257">
        <id>Q9NRQ2</id>
        <label>PLSCR4</label>
    </interactant>
    <organismsDiffer>false</organismsDiffer>
    <experiments>5</experiments>
</comment>
<comment type="interaction">
    <interactant intactId="EBI-358993">
        <id>Q15645</id>
    </interactant>
    <interactant intactId="EBI-359527">
        <id>P62875</id>
        <label>POLR2L</label>
    </interactant>
    <organismsDiffer>false</organismsDiffer>
    <experiments>3</experiments>
</comment>
<comment type="interaction">
    <interactant intactId="EBI-358993">
        <id>Q15645</id>
    </interactant>
    <interactant intactId="EBI-712311">
        <id>P67775</id>
        <label>PPP2CA</label>
    </interactant>
    <organismsDiffer>false</organismsDiffer>
    <experiments>6</experiments>
</comment>
<comment type="interaction">
    <interactant intactId="EBI-358993">
        <id>Q15645</id>
    </interactant>
    <interactant intactId="EBI-1383852">
        <id>P54646</id>
        <label>PRKAA2</label>
    </interactant>
    <organismsDiffer>false</organismsDiffer>
    <experiments>3</experiments>
</comment>
<comment type="interaction">
    <interactant intactId="EBI-358993">
        <id>Q15645</id>
    </interactant>
    <interactant intactId="EBI-716346">
        <id>O60260</id>
        <label>PRKN</label>
    </interactant>
    <organismsDiffer>false</organismsDiffer>
    <experiments>4</experiments>
</comment>
<comment type="interaction">
    <interactant intactId="EBI-358993">
        <id>Q15645</id>
    </interactant>
    <interactant intactId="EBI-740924">
        <id>Q9NZ81</id>
        <label>PRR13</label>
    </interactant>
    <organismsDiffer>false</organismsDiffer>
    <experiments>3</experiments>
</comment>
<comment type="interaction">
    <interactant intactId="EBI-358993">
        <id>Q15645</id>
    </interactant>
    <interactant intactId="EBI-372312">
        <id>P28062-2</id>
        <label>PSMB8</label>
    </interactant>
    <organismsDiffer>false</organismsDiffer>
    <experiments>3</experiments>
</comment>
<comment type="interaction">
    <interactant intactId="EBI-358993">
        <id>Q15645</id>
    </interactant>
    <interactant intactId="EBI-347462">
        <id>P47897</id>
        <label>QARS1</label>
    </interactant>
    <organismsDiffer>false</organismsDiffer>
    <experiments>6</experiments>
</comment>
<comment type="interaction">
    <interactant intactId="EBI-358993">
        <id>Q15645</id>
    </interactant>
    <interactant intactId="EBI-10209725">
        <id>P47897-2</id>
        <label>QARS1</label>
    </interactant>
    <organismsDiffer>false</organismsDiffer>
    <experiments>3</experiments>
</comment>
<comment type="interaction">
    <interactant intactId="EBI-358993">
        <id>Q15645</id>
    </interactant>
    <interactant intactId="EBI-372094">
        <id>Q9BQY4</id>
        <label>RHOXF2</label>
    </interactant>
    <organismsDiffer>false</organismsDiffer>
    <experiments>8</experiments>
</comment>
<comment type="interaction">
    <interactant intactId="EBI-358993">
        <id>Q15645</id>
    </interactant>
    <interactant intactId="EBI-2340927">
        <id>P78317</id>
        <label>RNF4</label>
    </interactant>
    <organismsDiffer>false</organismsDiffer>
    <experiments>3</experiments>
</comment>
<comment type="interaction">
    <interactant intactId="EBI-358993">
        <id>Q15645</id>
    </interactant>
    <interactant intactId="EBI-1050999">
        <id>P22307</id>
        <label>SCP2</label>
    </interactant>
    <organismsDiffer>false</organismsDiffer>
    <experiments>4</experiments>
</comment>
<comment type="interaction">
    <interactant intactId="EBI-358993">
        <id>Q15645</id>
    </interactant>
    <interactant intactId="EBI-727004">
        <id>O00560</id>
        <label>SDCBP</label>
    </interactant>
    <organismsDiffer>false</organismsDiffer>
    <experiments>3</experiments>
</comment>
<comment type="interaction">
    <interactant intactId="EBI-358993">
        <id>Q15645</id>
    </interactant>
    <interactant intactId="EBI-711619">
        <id>Q13228</id>
        <label>SELENBP1</label>
    </interactant>
    <organismsDiffer>false</organismsDiffer>
    <experiments>6</experiments>
</comment>
<comment type="interaction">
    <interactant intactId="EBI-358993">
        <id>Q15645</id>
    </interactant>
    <interactant intactId="EBI-11017428">
        <id>Q13214-2</id>
        <label>SEMA3B</label>
    </interactant>
    <organismsDiffer>false</organismsDiffer>
    <experiments>3</experiments>
</comment>
<comment type="interaction">
    <interactant intactId="EBI-358993">
        <id>Q15645</id>
    </interactant>
    <interactant intactId="EBI-6447340">
        <id>Q9NTN9</id>
        <label>SEMA4G</label>
    </interactant>
    <organismsDiffer>false</organismsDiffer>
    <experiments>3</experiments>
</comment>
<comment type="interaction">
    <interactant intactId="EBI-358993">
        <id>Q15645</id>
    </interactant>
    <interactant intactId="EBI-9089805">
        <id>Q9NTN9-3</id>
        <label>SEMA4G</label>
    </interactant>
    <organismsDiffer>false</organismsDiffer>
    <experiments>3</experiments>
</comment>
<comment type="interaction">
    <interactant intactId="EBI-358993">
        <id>Q15645</id>
    </interactant>
    <interactant intactId="EBI-9843813">
        <id>Q9H0F6-2</id>
        <label>SHARPIN</label>
    </interactant>
    <organismsDiffer>false</organismsDiffer>
    <experiments>3</experiments>
</comment>
<comment type="interaction">
    <interactant intactId="EBI-358993">
        <id>Q15645</id>
    </interactant>
    <interactant intactId="EBI-750381">
        <id>O15389</id>
        <label>SIGLEC5</label>
    </interactant>
    <organismsDiffer>false</organismsDiffer>
    <experiments>4</experiments>
</comment>
<comment type="interaction">
    <interactant intactId="EBI-358993">
        <id>Q15645</id>
    </interactant>
    <interactant intactId="EBI-743976">
        <id>Q96LM6</id>
        <label>SPMIP9</label>
    </interactant>
    <organismsDiffer>false</organismsDiffer>
    <experiments>7</experiments>
</comment>
<comment type="interaction">
    <interactant intactId="EBI-358993">
        <id>Q15645</id>
    </interactant>
    <interactant intactId="EBI-10248098">
        <id>Q5W111</id>
        <label>SPRYD7</label>
    </interactant>
    <organismsDiffer>false</organismsDiffer>
    <experiments>3</experiments>
</comment>
<comment type="interaction">
    <interactant intactId="EBI-358993">
        <id>Q15645</id>
    </interactant>
    <interactant intactId="EBI-396676">
        <id>O95630</id>
        <label>STAMBP</label>
    </interactant>
    <organismsDiffer>false</organismsDiffer>
    <experiments>4</experiments>
</comment>
<comment type="interaction">
    <interactant intactId="EBI-358993">
        <id>Q15645</id>
    </interactant>
    <interactant intactId="EBI-752030">
        <id>Q96A09</id>
        <label>TENT5B</label>
    </interactant>
    <organismsDiffer>false</organismsDiffer>
    <experiments>3</experiments>
</comment>
<comment type="interaction">
    <interactant intactId="EBI-358993">
        <id>Q15645</id>
    </interactant>
    <interactant intactId="EBI-715869">
        <id>Q9GZM7</id>
        <label>TINAGL1</label>
    </interactant>
    <organismsDiffer>false</organismsDiffer>
    <experiments>6</experiments>
</comment>
<comment type="interaction">
    <interactant intactId="EBI-358993">
        <id>Q15645</id>
    </interactant>
    <interactant intactId="EBI-10303636">
        <id>Q9GZM7-3</id>
        <label>TINAGL1</label>
    </interactant>
    <organismsDiffer>false</organismsDiffer>
    <experiments>3</experiments>
</comment>
<comment type="interaction">
    <interactant intactId="EBI-358993">
        <id>Q15645</id>
    </interactant>
    <interactant intactId="EBI-2269715">
        <id>Q8NDV7</id>
        <label>TNRC6A</label>
    </interactant>
    <organismsDiffer>false</organismsDiffer>
    <experiments>3</experiments>
</comment>
<comment type="interaction">
    <interactant intactId="EBI-358993">
        <id>Q15645</id>
    </interactant>
    <interactant intactId="EBI-1783169">
        <id>P13693</id>
        <label>TPT1</label>
    </interactant>
    <organismsDiffer>false</organismsDiffer>
    <experiments>3</experiments>
</comment>
<comment type="interaction">
    <interactant intactId="EBI-358993">
        <id>Q15645</id>
    </interactant>
    <interactant intactId="EBI-358993">
        <id>Q15645</id>
        <label>TRIP13</label>
    </interactant>
    <organismsDiffer>false</organismsDiffer>
    <experiments>8</experiments>
</comment>
<comment type="interaction">
    <interactant intactId="EBI-358993">
        <id>Q15645</id>
    </interactant>
    <interactant intactId="EBI-10180829">
        <id>Q7KZS0</id>
        <label>UBE2I</label>
    </interactant>
    <organismsDiffer>false</organismsDiffer>
    <experiments>3</experiments>
</comment>
<comment type="interaction">
    <interactant intactId="EBI-358993">
        <id>Q15645</id>
    </interactant>
    <interactant intactId="EBI-286357">
        <id>P11473</id>
        <label>VDR</label>
    </interactant>
    <organismsDiffer>false</organismsDiffer>
    <experiments>3</experiments>
</comment>
<comment type="interaction">
    <interactant intactId="EBI-358993">
        <id>Q15645</id>
    </interactant>
    <interactant intactId="EBI-10191303">
        <id>O95231</id>
        <label>VENTX</label>
    </interactant>
    <organismsDiffer>false</organismsDiffer>
    <experiments>3</experiments>
</comment>
<comment type="interaction">
    <interactant intactId="EBI-358993">
        <id>Q15645</id>
    </interactant>
    <interactant intactId="EBI-17634549">
        <id>Q9UJ78-2</id>
        <label>ZMYM5</label>
    </interactant>
    <organismsDiffer>false</organismsDiffer>
    <experiments>3</experiments>
</comment>
<comment type="alternative products">
    <event type="alternative splicing"/>
    <isoform>
        <id>Q15645-1</id>
        <name>1</name>
        <sequence type="displayed"/>
    </isoform>
    <isoform>
        <id>Q15645-2</id>
        <name>2</name>
        <sequence type="described" ref="VSP_016957"/>
    </isoform>
</comment>
<comment type="disease" evidence="3">
    <disease id="DI-05048">
        <name>Mosaic variegated aneuploidy syndrome 3</name>
        <acronym>MVA3</acronym>
        <description>A form of mosaic variegated aneuploidy syndrome, a severe disorder characterized by mosaic aneuploidies, predominantly trisomies and monosomies, involving multiple different chromosomes and tissues. Affected individuals typically present with severe intrauterine growth retardation and microcephaly. Eye anomalies, mild dysmorphism, variable developmental delay, and a broad spectrum of additional congenital abnormalities and medical conditions may also occur. The risk of malignancy is high, with rhabdomyosarcoma, Wilms tumor and leukemia reported in several cases. MVA3 inheritance is autosomal recessive.</description>
        <dbReference type="MIM" id="617598"/>
    </disease>
    <text>The disease is caused by variants affecting the gene represented in this entry. MVA3 is caused by biallelic mutations in the TRIP13 gene.</text>
</comment>
<comment type="disease" evidence="4">
    <disease id="DI-05912">
        <name>Oocyte/zygote/embryo maturation arrest 9</name>
        <acronym>OZEMA9</acronym>
        <description>An autosomal recessive infertility disorder due to oocyte meiotic arrest at metaphase I. Abnormal zygotic cleavage has been observed in some patients.</description>
        <dbReference type="MIM" id="619011"/>
    </disease>
    <text>The disease may be caused by variants affecting the gene represented in this entry.</text>
</comment>
<comment type="similarity">
    <text evidence="8">Belongs to the AAA ATPase family. PCH2 subfamily.</text>
</comment>
<comment type="sequence caution" evidence="8">
    <conflict type="frameshift">
        <sequence resource="EMBL-CDS" id="AAC41732"/>
    </conflict>
</comment>
<sequence length="432" mass="48551">MDEAVGDLKQALPCVAESPTVHVEVHQRGSSTAKKEDINLSVRKLLNRHNIVFGDYTWTEFDEPFLTRNVQSVSIIDTELKVKDSQPIDLSACTVALHIFQLNEDGPSSENLEEETENIIAANHWVLPAAEFHGLWDSLVYDVEVKSHLLDYVMTTLLFSDKNVNSNLITWNRVVLLHGPPGTGKTSLCKALAQKLTIRLSSRYRYGQLIEINSHSLFSKWFSESGKLVTKMFQKIQDLIDDKDALVFVLIDEVESLTAARNACRAGTEPSDAIRVVNAVLTQIDQIKRHSNVVILTTSNITEKIDVAFVDRADIKQYIGPPSAAAIFKIYLSCLEELMKCQIIYPRQQLLTLRELEMIGFIENNVSKLSLLLNDISRKSEGLSGRVLRKLPFLAHALYVQAPTVTIEGFLQALSLAVDKQFEERKKLAAYI</sequence>